<name>RMF_ECO57</name>
<feature type="chain" id="PRO_0000097364" description="Ribosome modulation factor">
    <location>
        <begin position="1"/>
        <end position="55"/>
    </location>
</feature>
<evidence type="ECO:0000255" key="1">
    <source>
        <dbReference type="HAMAP-Rule" id="MF_00919"/>
    </source>
</evidence>
<protein>
    <recommendedName>
        <fullName evidence="1">Ribosome modulation factor</fullName>
        <shortName evidence="1">RMF</shortName>
    </recommendedName>
</protein>
<organism>
    <name type="scientific">Escherichia coli O157:H7</name>
    <dbReference type="NCBI Taxonomy" id="83334"/>
    <lineage>
        <taxon>Bacteria</taxon>
        <taxon>Pseudomonadati</taxon>
        <taxon>Pseudomonadota</taxon>
        <taxon>Gammaproteobacteria</taxon>
        <taxon>Enterobacterales</taxon>
        <taxon>Enterobacteriaceae</taxon>
        <taxon>Escherichia</taxon>
    </lineage>
</organism>
<comment type="function">
    <text evidence="1">During stationary phase, converts 70S ribosomes to an inactive dimeric form (100S ribosomes). May form immature 90S particles, which are converted to mature 100S ribosomes by the hibernation promoting factor Hpf.</text>
</comment>
<comment type="subunit">
    <text evidence="1">Associates exclusively with 100S ribosomes.</text>
</comment>
<comment type="subcellular location">
    <subcellularLocation>
        <location evidence="1">Cytoplasm</location>
    </subcellularLocation>
</comment>
<comment type="induction">
    <text evidence="1">Induced during stationary growth phase.</text>
</comment>
<comment type="similarity">
    <text evidence="1">Belongs to the ribosome modulation factor family.</text>
</comment>
<gene>
    <name evidence="1" type="primary">rmf</name>
    <name type="ordered locus">Z1303</name>
    <name type="ordered locus">ECs1037</name>
</gene>
<dbReference type="EMBL" id="AE005174">
    <property type="protein sequence ID" value="AAG55439.1"/>
    <property type="molecule type" value="Genomic_DNA"/>
</dbReference>
<dbReference type="EMBL" id="BA000007">
    <property type="protein sequence ID" value="BAB34460.1"/>
    <property type="molecule type" value="Genomic_DNA"/>
</dbReference>
<dbReference type="PIR" id="C85622">
    <property type="entry name" value="C85622"/>
</dbReference>
<dbReference type="PIR" id="E90758">
    <property type="entry name" value="E90758"/>
</dbReference>
<dbReference type="RefSeq" id="NP_309064.1">
    <property type="nucleotide sequence ID" value="NC_002695.1"/>
</dbReference>
<dbReference type="RefSeq" id="WP_000828648.1">
    <property type="nucleotide sequence ID" value="NZ_VOAI01000006.1"/>
</dbReference>
<dbReference type="SMR" id="P0AFW3"/>
<dbReference type="STRING" id="155864.Z1303"/>
<dbReference type="GeneID" id="913590"/>
<dbReference type="GeneID" id="93776461"/>
<dbReference type="KEGG" id="ece:Z1303"/>
<dbReference type="KEGG" id="ecs:ECs_1037"/>
<dbReference type="PATRIC" id="fig|386585.9.peg.1161"/>
<dbReference type="eggNOG" id="COG3130">
    <property type="taxonomic scope" value="Bacteria"/>
</dbReference>
<dbReference type="HOGENOM" id="CLU_203350_0_0_6"/>
<dbReference type="OMA" id="EACPYQQ"/>
<dbReference type="Proteomes" id="UP000000558">
    <property type="component" value="Chromosome"/>
</dbReference>
<dbReference type="Proteomes" id="UP000002519">
    <property type="component" value="Chromosome"/>
</dbReference>
<dbReference type="GO" id="GO:0005737">
    <property type="term" value="C:cytoplasm"/>
    <property type="evidence" value="ECO:0007669"/>
    <property type="project" value="UniProtKB-SubCell"/>
</dbReference>
<dbReference type="GO" id="GO:0006417">
    <property type="term" value="P:regulation of translation"/>
    <property type="evidence" value="ECO:0007669"/>
    <property type="project" value="UniProtKB-UniRule"/>
</dbReference>
<dbReference type="FunFam" id="1.10.10.620:FF:000001">
    <property type="entry name" value="Ribosome modulation factor"/>
    <property type="match status" value="1"/>
</dbReference>
<dbReference type="Gene3D" id="1.10.10.620">
    <property type="entry name" value="ribosome modulation factor like domain"/>
    <property type="match status" value="1"/>
</dbReference>
<dbReference type="HAMAP" id="MF_00919">
    <property type="entry name" value="RMF"/>
    <property type="match status" value="1"/>
</dbReference>
<dbReference type="InterPro" id="IPR007040">
    <property type="entry name" value="Ribosome_modulation_factor"/>
</dbReference>
<dbReference type="InterPro" id="IPR023200">
    <property type="entry name" value="RMF_sf"/>
</dbReference>
<dbReference type="NCBIfam" id="NF011162">
    <property type="entry name" value="PRK14563.1"/>
    <property type="match status" value="1"/>
</dbReference>
<dbReference type="NCBIfam" id="NF041886">
    <property type="entry name" value="Rmf_CrpP_fam"/>
    <property type="match status" value="1"/>
</dbReference>
<dbReference type="Pfam" id="PF04957">
    <property type="entry name" value="RMF"/>
    <property type="match status" value="1"/>
</dbReference>
<accession>P0AFW3</accession>
<accession>P22986</accession>
<accession>P77441</accession>
<sequence>MKRQKRDRLERAHQRGYQAGIAGRSKEMCPYQTLNQRSQWLGGWREAMADRVVMA</sequence>
<reference key="1">
    <citation type="journal article" date="2001" name="Nature">
        <title>Genome sequence of enterohaemorrhagic Escherichia coli O157:H7.</title>
        <authorList>
            <person name="Perna N.T."/>
            <person name="Plunkett G. III"/>
            <person name="Burland V."/>
            <person name="Mau B."/>
            <person name="Glasner J.D."/>
            <person name="Rose D.J."/>
            <person name="Mayhew G.F."/>
            <person name="Evans P.S."/>
            <person name="Gregor J."/>
            <person name="Kirkpatrick H.A."/>
            <person name="Posfai G."/>
            <person name="Hackett J."/>
            <person name="Klink S."/>
            <person name="Boutin A."/>
            <person name="Shao Y."/>
            <person name="Miller L."/>
            <person name="Grotbeck E.J."/>
            <person name="Davis N.W."/>
            <person name="Lim A."/>
            <person name="Dimalanta E.T."/>
            <person name="Potamousis K."/>
            <person name="Apodaca J."/>
            <person name="Anantharaman T.S."/>
            <person name="Lin J."/>
            <person name="Yen G."/>
            <person name="Schwartz D.C."/>
            <person name="Welch R.A."/>
            <person name="Blattner F.R."/>
        </authorList>
    </citation>
    <scope>NUCLEOTIDE SEQUENCE [LARGE SCALE GENOMIC DNA]</scope>
    <source>
        <strain>O157:H7 / EDL933 / ATCC 700927 / EHEC</strain>
    </source>
</reference>
<reference key="2">
    <citation type="journal article" date="2001" name="DNA Res.">
        <title>Complete genome sequence of enterohemorrhagic Escherichia coli O157:H7 and genomic comparison with a laboratory strain K-12.</title>
        <authorList>
            <person name="Hayashi T."/>
            <person name="Makino K."/>
            <person name="Ohnishi M."/>
            <person name="Kurokawa K."/>
            <person name="Ishii K."/>
            <person name="Yokoyama K."/>
            <person name="Han C.-G."/>
            <person name="Ohtsubo E."/>
            <person name="Nakayama K."/>
            <person name="Murata T."/>
            <person name="Tanaka M."/>
            <person name="Tobe T."/>
            <person name="Iida T."/>
            <person name="Takami H."/>
            <person name="Honda T."/>
            <person name="Sasakawa C."/>
            <person name="Ogasawara N."/>
            <person name="Yasunaga T."/>
            <person name="Kuhara S."/>
            <person name="Shiba T."/>
            <person name="Hattori M."/>
            <person name="Shinagawa H."/>
        </authorList>
    </citation>
    <scope>NUCLEOTIDE SEQUENCE [LARGE SCALE GENOMIC DNA]</scope>
    <source>
        <strain>O157:H7 / Sakai / RIMD 0509952 / EHEC</strain>
    </source>
</reference>
<proteinExistence type="inferred from homology"/>
<keyword id="KW-0963">Cytoplasm</keyword>
<keyword id="KW-1185">Reference proteome</keyword>
<keyword id="KW-0810">Translation regulation</keyword>